<sequence>MSELHEVQITEDNPLLQDPLKAAELAAKLLQVQEQKHSIETPYGVVTVTIQGTPKPKRPAIVTFHDVGMDHKMCFDTLFKYEDMCEIVKNFVVCHIDAPGQEDGATIYPPGYQYPSLDQLAETIPCVLQYLNFPSIIGIGVGAGAYIFAKYTLSHANTVEGLVLINIDPNAKGWMDWAAQKLTGLTQSISDKMLGHLFSAEEISGNSDVVRQYKASISNSPLISNYQLYWNSYNSRRDLNFERGGGVTLKCPVMLVVGDQAPHEDAVVECNSKLDPTQTSFLKMADSGGQPQITQPGKMTEAFKYFVQGMGYMASSVMTRLSRSRTASLSSEGNRSRSRTLSQSSESGGGPPAPLAEVTC</sequence>
<name>NDRG2_XENLA</name>
<accession>Q7ZY73</accession>
<gene>
    <name type="primary">ndrg2</name>
</gene>
<reference evidence="4" key="1">
    <citation type="submission" date="2003-01" db="EMBL/GenBank/DDBJ databases">
        <authorList>
            <consortium name="NIH - Xenopus Gene Collection (XGC) project"/>
        </authorList>
    </citation>
    <scope>NUCLEOTIDE SEQUENCE [LARGE SCALE MRNA]</scope>
    <source>
        <tissue evidence="4">Embryo</tissue>
    </source>
</reference>
<keyword id="KW-0963">Cytoplasm</keyword>
<keyword id="KW-0217">Developmental protein</keyword>
<keyword id="KW-0221">Differentiation</keyword>
<keyword id="KW-0524">Neurogenesis</keyword>
<keyword id="KW-1185">Reference proteome</keyword>
<keyword id="KW-0879">Wnt signaling pathway</keyword>
<organism>
    <name type="scientific">Xenopus laevis</name>
    <name type="common">African clawed frog</name>
    <dbReference type="NCBI Taxonomy" id="8355"/>
    <lineage>
        <taxon>Eukaryota</taxon>
        <taxon>Metazoa</taxon>
        <taxon>Chordata</taxon>
        <taxon>Craniata</taxon>
        <taxon>Vertebrata</taxon>
        <taxon>Euteleostomi</taxon>
        <taxon>Amphibia</taxon>
        <taxon>Batrachia</taxon>
        <taxon>Anura</taxon>
        <taxon>Pipoidea</taxon>
        <taxon>Pipidae</taxon>
        <taxon>Xenopodinae</taxon>
        <taxon>Xenopus</taxon>
        <taxon>Xenopus</taxon>
    </lineage>
</organism>
<dbReference type="EMBL" id="BC043915">
    <property type="protein sequence ID" value="AAH43915.1"/>
    <property type="molecule type" value="mRNA"/>
</dbReference>
<dbReference type="RefSeq" id="NP_001080389.1">
    <property type="nucleotide sequence ID" value="NM_001086920.1"/>
</dbReference>
<dbReference type="SMR" id="Q7ZY73"/>
<dbReference type="ESTHER" id="xenla-ndrg2">
    <property type="family name" value="Ndr_family"/>
</dbReference>
<dbReference type="DNASU" id="380081"/>
<dbReference type="GeneID" id="380081"/>
<dbReference type="KEGG" id="xla:380081"/>
<dbReference type="AGR" id="Xenbase:XB-GENE-951915"/>
<dbReference type="CTD" id="380081"/>
<dbReference type="Xenbase" id="XB-GENE-951915">
    <property type="gene designation" value="ndrg2.S"/>
</dbReference>
<dbReference type="OrthoDB" id="191979at2759"/>
<dbReference type="CD-CODE" id="78E86D56">
    <property type="entry name" value="Mitochondrial cloud"/>
</dbReference>
<dbReference type="Proteomes" id="UP000186698">
    <property type="component" value="Chromosome 1S"/>
</dbReference>
<dbReference type="Bgee" id="380081">
    <property type="expression patterns" value="Expressed in brain and 19 other cell types or tissues"/>
</dbReference>
<dbReference type="GO" id="GO:0005737">
    <property type="term" value="C:cytoplasm"/>
    <property type="evidence" value="ECO:0000318"/>
    <property type="project" value="GO_Central"/>
</dbReference>
<dbReference type="GO" id="GO:0030154">
    <property type="term" value="P:cell differentiation"/>
    <property type="evidence" value="ECO:0007669"/>
    <property type="project" value="UniProtKB-KW"/>
</dbReference>
<dbReference type="GO" id="GO:0007399">
    <property type="term" value="P:nervous system development"/>
    <property type="evidence" value="ECO:0007669"/>
    <property type="project" value="UniProtKB-KW"/>
</dbReference>
<dbReference type="GO" id="GO:0007165">
    <property type="term" value="P:signal transduction"/>
    <property type="evidence" value="ECO:0000318"/>
    <property type="project" value="GO_Central"/>
</dbReference>
<dbReference type="GO" id="GO:0016055">
    <property type="term" value="P:Wnt signaling pathway"/>
    <property type="evidence" value="ECO:0007669"/>
    <property type="project" value="UniProtKB-KW"/>
</dbReference>
<dbReference type="FunFam" id="3.40.50.1820:FF:000034">
    <property type="entry name" value="NDRG2 isoform 1"/>
    <property type="match status" value="1"/>
</dbReference>
<dbReference type="Gene3D" id="3.40.50.1820">
    <property type="entry name" value="alpha/beta hydrolase"/>
    <property type="match status" value="1"/>
</dbReference>
<dbReference type="InterPro" id="IPR029058">
    <property type="entry name" value="AB_hydrolase_fold"/>
</dbReference>
<dbReference type="InterPro" id="IPR004142">
    <property type="entry name" value="NDRG"/>
</dbReference>
<dbReference type="PANTHER" id="PTHR11034">
    <property type="entry name" value="N-MYC DOWNSTREAM REGULATED"/>
    <property type="match status" value="1"/>
</dbReference>
<dbReference type="Pfam" id="PF03096">
    <property type="entry name" value="Ndr"/>
    <property type="match status" value="1"/>
</dbReference>
<dbReference type="SUPFAM" id="SSF53474">
    <property type="entry name" value="alpha/beta-Hydrolases"/>
    <property type="match status" value="1"/>
</dbReference>
<protein>
    <recommendedName>
        <fullName>Protein NDRG2</fullName>
    </recommendedName>
</protein>
<proteinExistence type="evidence at transcript level"/>
<feature type="chain" id="PRO_0000232428" description="Protein NDRG2">
    <location>
        <begin position="1"/>
        <end position="360"/>
    </location>
</feature>
<feature type="region of interest" description="Disordered" evidence="3">
    <location>
        <begin position="324"/>
        <end position="360"/>
    </location>
</feature>
<comment type="function">
    <text evidence="1">Contributes to the regulation of the Wnt signaling pathway. Down-regulates CTNNB1-mediated transcriptional activation of target genes. May be involved in neuron differentiation (By similarity).</text>
</comment>
<comment type="subcellular location">
    <subcellularLocation>
        <location evidence="1">Cytoplasm</location>
    </subcellularLocation>
</comment>
<comment type="similarity">
    <text evidence="2">Belongs to the NDRG family.</text>
</comment>
<evidence type="ECO:0000250" key="1"/>
<evidence type="ECO:0000255" key="2"/>
<evidence type="ECO:0000256" key="3">
    <source>
        <dbReference type="SAM" id="MobiDB-lite"/>
    </source>
</evidence>
<evidence type="ECO:0000312" key="4">
    <source>
        <dbReference type="EMBL" id="AAH43915.1"/>
    </source>
</evidence>